<dbReference type="EC" id="5.2.1.8"/>
<dbReference type="EMBL" id="AY568527">
    <property type="protein sequence ID" value="AAS75310.1"/>
    <property type="molecule type" value="mRNA"/>
</dbReference>
<dbReference type="EMBL" id="AL163818">
    <property type="protein sequence ID" value="CAB87793.1"/>
    <property type="molecule type" value="Genomic_DNA"/>
</dbReference>
<dbReference type="EMBL" id="CP002686">
    <property type="protein sequence ID" value="AEE80475.1"/>
    <property type="molecule type" value="Genomic_DNA"/>
</dbReference>
<dbReference type="EMBL" id="CP002686">
    <property type="protein sequence ID" value="AEE80476.1"/>
    <property type="molecule type" value="Genomic_DNA"/>
</dbReference>
<dbReference type="EMBL" id="CP002686">
    <property type="protein sequence ID" value="AEE80477.1"/>
    <property type="molecule type" value="Genomic_DNA"/>
</dbReference>
<dbReference type="EMBL" id="CP002686">
    <property type="protein sequence ID" value="ANM64659.1"/>
    <property type="molecule type" value="Genomic_DNA"/>
</dbReference>
<dbReference type="EMBL" id="BT000915">
    <property type="protein sequence ID" value="AAN41315.1"/>
    <property type="molecule type" value="mRNA"/>
</dbReference>
<dbReference type="EMBL" id="AK319108">
    <property type="protein sequence ID" value="BAH57223.1"/>
    <property type="molecule type" value="mRNA"/>
</dbReference>
<dbReference type="PIR" id="T49181">
    <property type="entry name" value="T49181"/>
</dbReference>
<dbReference type="RefSeq" id="NP_001190169.1">
    <molecule id="Q9LY75-1"/>
    <property type="nucleotide sequence ID" value="NM_001203240.1"/>
</dbReference>
<dbReference type="RefSeq" id="NP_001326672.1">
    <molecule id="Q9LY75-1"/>
    <property type="nucleotide sequence ID" value="NM_001340212.1"/>
</dbReference>
<dbReference type="RefSeq" id="NP_191899.1">
    <molecule id="Q9LY75-1"/>
    <property type="nucleotide sequence ID" value="NM_116205.5"/>
</dbReference>
<dbReference type="RefSeq" id="NP_850740.1">
    <molecule id="Q9LY75-3"/>
    <property type="nucleotide sequence ID" value="NM_180409.2"/>
</dbReference>
<dbReference type="SMR" id="Q9LY75"/>
<dbReference type="BioGRID" id="10829">
    <property type="interactions" value="4"/>
</dbReference>
<dbReference type="FunCoup" id="Q9LY75">
    <property type="interactions" value="1588"/>
</dbReference>
<dbReference type="IntAct" id="Q9LY75">
    <property type="interactions" value="8"/>
</dbReference>
<dbReference type="STRING" id="3702.Q9LY75"/>
<dbReference type="iPTMnet" id="Q9LY75"/>
<dbReference type="PaxDb" id="3702-AT3G63400.3"/>
<dbReference type="ProteomicsDB" id="224696">
    <molecule id="Q9LY75-1"/>
</dbReference>
<dbReference type="EnsemblPlants" id="AT3G63400.1">
    <molecule id="Q9LY75-1"/>
    <property type="protein sequence ID" value="AT3G63400.1"/>
    <property type="gene ID" value="AT3G63400"/>
</dbReference>
<dbReference type="EnsemblPlants" id="AT3G63400.2">
    <molecule id="Q9LY75-3"/>
    <property type="protein sequence ID" value="AT3G63400.2"/>
    <property type="gene ID" value="AT3G63400"/>
</dbReference>
<dbReference type="EnsemblPlants" id="AT3G63400.3">
    <molecule id="Q9LY75-1"/>
    <property type="protein sequence ID" value="AT3G63400.3"/>
    <property type="gene ID" value="AT3G63400"/>
</dbReference>
<dbReference type="EnsemblPlants" id="AT3G63400.4">
    <molecule id="Q9LY75-1"/>
    <property type="protein sequence ID" value="AT3G63400.4"/>
    <property type="gene ID" value="AT3G63400"/>
</dbReference>
<dbReference type="GeneID" id="825515"/>
<dbReference type="Gramene" id="AT3G63400.1">
    <molecule id="Q9LY75-1"/>
    <property type="protein sequence ID" value="AT3G63400.1"/>
    <property type="gene ID" value="AT3G63400"/>
</dbReference>
<dbReference type="Gramene" id="AT3G63400.2">
    <molecule id="Q9LY75-3"/>
    <property type="protein sequence ID" value="AT3G63400.2"/>
    <property type="gene ID" value="AT3G63400"/>
</dbReference>
<dbReference type="Gramene" id="AT3G63400.3">
    <molecule id="Q9LY75-1"/>
    <property type="protein sequence ID" value="AT3G63400.3"/>
    <property type="gene ID" value="AT3G63400"/>
</dbReference>
<dbReference type="Gramene" id="AT3G63400.4">
    <molecule id="Q9LY75-1"/>
    <property type="protein sequence ID" value="AT3G63400.4"/>
    <property type="gene ID" value="AT3G63400"/>
</dbReference>
<dbReference type="KEGG" id="ath:AT3G63400"/>
<dbReference type="Araport" id="AT3G63400"/>
<dbReference type="TAIR" id="AT3G63400"/>
<dbReference type="eggNOG" id="KOG0865">
    <property type="taxonomic scope" value="Eukaryota"/>
</dbReference>
<dbReference type="HOGENOM" id="CLU_012062_33_5_1"/>
<dbReference type="InParanoid" id="Q9LY75"/>
<dbReference type="OMA" id="HKDESWA"/>
<dbReference type="PhylomeDB" id="Q9LY75"/>
<dbReference type="CD-CODE" id="9A8A194B">
    <property type="entry name" value="Nuclear speckle"/>
</dbReference>
<dbReference type="PRO" id="PR:Q9LY75"/>
<dbReference type="Proteomes" id="UP000006548">
    <property type="component" value="Chromosome 3"/>
</dbReference>
<dbReference type="ExpressionAtlas" id="Q9LY75">
    <property type="expression patterns" value="baseline and differential"/>
</dbReference>
<dbReference type="GO" id="GO:0016607">
    <property type="term" value="C:nuclear speck"/>
    <property type="evidence" value="ECO:0007669"/>
    <property type="project" value="UniProtKB-SubCell"/>
</dbReference>
<dbReference type="GO" id="GO:0003755">
    <property type="term" value="F:peptidyl-prolyl cis-trans isomerase activity"/>
    <property type="evidence" value="ECO:0007669"/>
    <property type="project" value="UniProtKB-KW"/>
</dbReference>
<dbReference type="GO" id="GO:0006457">
    <property type="term" value="P:protein folding"/>
    <property type="evidence" value="ECO:0007669"/>
    <property type="project" value="InterPro"/>
</dbReference>
<dbReference type="GO" id="GO:0008380">
    <property type="term" value="P:RNA splicing"/>
    <property type="evidence" value="ECO:0000303"/>
    <property type="project" value="TAIR"/>
</dbReference>
<dbReference type="CDD" id="cd01926">
    <property type="entry name" value="cyclophilin_ABH_like"/>
    <property type="match status" value="1"/>
</dbReference>
<dbReference type="FunFam" id="2.40.100.10:FF:000022">
    <property type="entry name" value="Peptidyl-prolyl cis-trans isomerase CYP95"/>
    <property type="match status" value="1"/>
</dbReference>
<dbReference type="Gene3D" id="2.40.100.10">
    <property type="entry name" value="Cyclophilin-like"/>
    <property type="match status" value="1"/>
</dbReference>
<dbReference type="InterPro" id="IPR029000">
    <property type="entry name" value="Cyclophilin-like_dom_sf"/>
</dbReference>
<dbReference type="InterPro" id="IPR020892">
    <property type="entry name" value="Cyclophilin-type_PPIase_CS"/>
</dbReference>
<dbReference type="InterPro" id="IPR002130">
    <property type="entry name" value="Cyclophilin-type_PPIase_dom"/>
</dbReference>
<dbReference type="PANTHER" id="PTHR11071">
    <property type="entry name" value="PEPTIDYL-PROLYL CIS-TRANS ISOMERASE"/>
    <property type="match status" value="1"/>
</dbReference>
<dbReference type="PANTHER" id="PTHR11071:SF447">
    <property type="entry name" value="PEPTIDYL-PROLYL CIS-TRANS ISOMERASE CYP63"/>
    <property type="match status" value="1"/>
</dbReference>
<dbReference type="Pfam" id="PF00160">
    <property type="entry name" value="Pro_isomerase"/>
    <property type="match status" value="1"/>
</dbReference>
<dbReference type="PRINTS" id="PR00153">
    <property type="entry name" value="CSAPPISMRASE"/>
</dbReference>
<dbReference type="SUPFAM" id="SSF50891">
    <property type="entry name" value="Cyclophilin-like"/>
    <property type="match status" value="1"/>
</dbReference>
<dbReference type="PROSITE" id="PS00170">
    <property type="entry name" value="CSA_PPIASE_1"/>
    <property type="match status" value="1"/>
</dbReference>
<dbReference type="PROSITE" id="PS50072">
    <property type="entry name" value="CSA_PPIASE_2"/>
    <property type="match status" value="1"/>
</dbReference>
<name>CYP63_ARATH</name>
<proteinExistence type="evidence at protein level"/>
<organism>
    <name type="scientific">Arabidopsis thaliana</name>
    <name type="common">Mouse-ear cress</name>
    <dbReference type="NCBI Taxonomy" id="3702"/>
    <lineage>
        <taxon>Eukaryota</taxon>
        <taxon>Viridiplantae</taxon>
        <taxon>Streptophyta</taxon>
        <taxon>Embryophyta</taxon>
        <taxon>Tracheophyta</taxon>
        <taxon>Spermatophyta</taxon>
        <taxon>Magnoliopsida</taxon>
        <taxon>eudicotyledons</taxon>
        <taxon>Gunneridae</taxon>
        <taxon>Pentapetalae</taxon>
        <taxon>rosids</taxon>
        <taxon>malvids</taxon>
        <taxon>Brassicales</taxon>
        <taxon>Brassicaceae</taxon>
        <taxon>Camelineae</taxon>
        <taxon>Arabidopsis</taxon>
    </lineage>
</organism>
<accession>Q9LY75</accession>
<accession>C0Z3E4</accession>
<accession>F4J100</accession>
<accession>Q6Q150</accession>
<evidence type="ECO:0000255" key="1">
    <source>
        <dbReference type="PROSITE-ProRule" id="PRU00156"/>
    </source>
</evidence>
<evidence type="ECO:0000256" key="2">
    <source>
        <dbReference type="SAM" id="MobiDB-lite"/>
    </source>
</evidence>
<evidence type="ECO:0000269" key="3">
    <source>
    </source>
</evidence>
<evidence type="ECO:0000269" key="4">
    <source>
    </source>
</evidence>
<evidence type="ECO:0000269" key="5">
    <source>
    </source>
</evidence>
<evidence type="ECO:0000269" key="6">
    <source>
    </source>
</evidence>
<evidence type="ECO:0000303" key="7">
    <source>
    </source>
</evidence>
<evidence type="ECO:0000305" key="8"/>
<evidence type="ECO:0007744" key="9">
    <source>
    </source>
</evidence>
<protein>
    <recommendedName>
        <fullName>Peptidyl-prolyl cis-trans isomerase CYP63</fullName>
        <shortName>AtCYP63</shortName>
        <shortName>PPIase CYP63</shortName>
        <ecNumber>5.2.1.8</ecNumber>
    </recommendedName>
    <alternativeName>
        <fullName>Cyclophilin-63</fullName>
    </alternativeName>
    <alternativeName>
        <fullName>Cyclophilin-like protein CypRS64</fullName>
    </alternativeName>
</protein>
<comment type="function">
    <text>PPIases accelerate the folding of proteins. It catalyzes the cis-trans isomerization of proline imidic peptide bonds in oligopeptides. May be implicated in the folding, transport, and assembly of proteins. Probably involved in early steps of spliceosomal assembly.</text>
</comment>
<comment type="catalytic activity">
    <reaction>
        <text>[protein]-peptidylproline (omega=180) = [protein]-peptidylproline (omega=0)</text>
        <dbReference type="Rhea" id="RHEA:16237"/>
        <dbReference type="Rhea" id="RHEA-COMP:10747"/>
        <dbReference type="Rhea" id="RHEA-COMP:10748"/>
        <dbReference type="ChEBI" id="CHEBI:83833"/>
        <dbReference type="ChEBI" id="CHEBI:83834"/>
        <dbReference type="EC" id="5.2.1.8"/>
    </reaction>
</comment>
<comment type="subunit">
    <text evidence="5 6">Interacts with SNRNP35, RNU1, SCL28, SCL30, SR30 and SR34. The binding to SR34 is phosphorylation-dependent (PubMed:15166240).</text>
</comment>
<comment type="interaction">
    <interactant intactId="EBI-2360522">
        <id>Q9LY75</id>
    </interactant>
    <interactant intactId="EBI-927052">
        <id>Q1PDV2</id>
        <label>SCL28</label>
    </interactant>
    <organismsDiffer>false</organismsDiffer>
    <experiments>4</experiments>
</comment>
<comment type="interaction">
    <interactant intactId="EBI-2360522">
        <id>Q9LY75</id>
    </interactant>
    <interactant intactId="EBI-927061">
        <id>Q8L3X8</id>
        <label>SCL30</label>
    </interactant>
    <organismsDiffer>false</organismsDiffer>
    <experiments>4</experiments>
</comment>
<comment type="interaction">
    <interactant intactId="EBI-2360522">
        <id>Q9LY75</id>
    </interactant>
    <interactant intactId="EBI-1540237">
        <id>Q9XFR5</id>
        <label>SR30</label>
    </interactant>
    <organismsDiffer>false</organismsDiffer>
    <experiments>4</experiments>
</comment>
<comment type="interaction">
    <interactant intactId="EBI-2360522">
        <id>Q9LY75</id>
    </interactant>
    <interactant intactId="EBI-927464">
        <id>O22315</id>
        <label>SR34</label>
    </interactant>
    <organismsDiffer>false</organismsDiffer>
    <experiments>3</experiments>
</comment>
<comment type="interaction">
    <interactant intactId="EBI-2360522">
        <id>Q9LY75</id>
    </interactant>
    <interactant intactId="EBI-1792008">
        <id>Q9SEE9</id>
        <label>SR45</label>
    </interactant>
    <organismsDiffer>false</organismsDiffer>
    <experiments>2</experiments>
</comment>
<comment type="subcellular location">
    <subcellularLocation>
        <location evidence="5">Nucleus</location>
        <location evidence="5">Nucleoplasm</location>
    </subcellularLocation>
    <subcellularLocation>
        <location evidence="5">Nucleus speckle</location>
    </subcellularLocation>
    <text>Moves from nuclear bodies to nuclear speckles upon interaction with SR proteins.</text>
</comment>
<comment type="alternative products">
    <event type="alternative splicing"/>
    <isoform>
        <id>Q9LY75-1</id>
        <name>1</name>
        <sequence type="displayed"/>
    </isoform>
    <isoform>
        <id>Q9LY75-2</id>
        <name>2</name>
        <sequence type="described" ref="VSP_055003"/>
    </isoform>
    <isoform>
        <id>Q9LY75-3</id>
        <name>3</name>
        <sequence type="described" ref="VSP_055002"/>
    </isoform>
</comment>
<comment type="tissue specificity">
    <text evidence="3 4">Ubiquitous.</text>
</comment>
<comment type="similarity">
    <text evidence="8">Belongs to the cyclophilin-type PPIase family.</text>
</comment>
<keyword id="KW-0025">Alternative splicing</keyword>
<keyword id="KW-0413">Isomerase</keyword>
<keyword id="KW-0539">Nucleus</keyword>
<keyword id="KW-0597">Phosphoprotein</keyword>
<keyword id="KW-1185">Reference proteome</keyword>
<keyword id="KW-0697">Rotamase</keyword>
<feature type="chain" id="PRO_0000429608" description="Peptidyl-prolyl cis-trans isomerase CYP63">
    <location>
        <begin position="1"/>
        <end position="570"/>
    </location>
</feature>
<feature type="domain" description="PPIase cyclophilin-type" evidence="1">
    <location>
        <begin position="10"/>
        <end position="174"/>
    </location>
</feature>
<feature type="region of interest" description="Disordered" evidence="2">
    <location>
        <begin position="180"/>
        <end position="570"/>
    </location>
</feature>
<feature type="compositionally biased region" description="Basic and acidic residues" evidence="2">
    <location>
        <begin position="203"/>
        <end position="219"/>
    </location>
</feature>
<feature type="compositionally biased region" description="Low complexity" evidence="2">
    <location>
        <begin position="229"/>
        <end position="238"/>
    </location>
</feature>
<feature type="compositionally biased region" description="Low complexity" evidence="2">
    <location>
        <begin position="246"/>
        <end position="259"/>
    </location>
</feature>
<feature type="compositionally biased region" description="Basic residues" evidence="2">
    <location>
        <begin position="262"/>
        <end position="292"/>
    </location>
</feature>
<feature type="compositionally biased region" description="Low complexity" evidence="2">
    <location>
        <begin position="297"/>
        <end position="309"/>
    </location>
</feature>
<feature type="compositionally biased region" description="Basic and acidic residues" evidence="2">
    <location>
        <begin position="323"/>
        <end position="339"/>
    </location>
</feature>
<feature type="compositionally biased region" description="Basic residues" evidence="2">
    <location>
        <begin position="340"/>
        <end position="351"/>
    </location>
</feature>
<feature type="compositionally biased region" description="Low complexity" evidence="2">
    <location>
        <begin position="352"/>
        <end position="365"/>
    </location>
</feature>
<feature type="compositionally biased region" description="Basic and acidic residues" evidence="2">
    <location>
        <begin position="387"/>
        <end position="397"/>
    </location>
</feature>
<feature type="compositionally biased region" description="Basic and acidic residues" evidence="2">
    <location>
        <begin position="437"/>
        <end position="467"/>
    </location>
</feature>
<feature type="compositionally biased region" description="Basic residues" evidence="2">
    <location>
        <begin position="468"/>
        <end position="490"/>
    </location>
</feature>
<feature type="compositionally biased region" description="Basic and acidic residues" evidence="2">
    <location>
        <begin position="495"/>
        <end position="505"/>
    </location>
</feature>
<feature type="compositionally biased region" description="Basic residues" evidence="2">
    <location>
        <begin position="509"/>
        <end position="523"/>
    </location>
</feature>
<feature type="compositionally biased region" description="Low complexity" evidence="2">
    <location>
        <begin position="546"/>
        <end position="555"/>
    </location>
</feature>
<feature type="modified residue" description="Phosphoserine" evidence="9">
    <location>
        <position position="340"/>
    </location>
</feature>
<feature type="splice variant" id="VSP_055002" description="In isoform 3." evidence="8">
    <location>
        <begin position="312"/>
        <end position="494"/>
    </location>
</feature>
<feature type="splice variant" id="VSP_055003" description="In isoform 2." evidence="7">
    <original>SHSPSPPGKRGLVSYAD</original>
    <variation>FSLTFSTRKERSG</variation>
    <location>
        <begin position="554"/>
        <end position="570"/>
    </location>
</feature>
<feature type="sequence conflict" description="In Ref. 5; BAH57223." evidence="8" ref="5">
    <original>N</original>
    <variation>D</variation>
    <location>
        <position position="299"/>
    </location>
</feature>
<feature type="sequence conflict" description="In Ref. 5; BAH57223." evidence="8" ref="5">
    <original>K</original>
    <variation>E</variation>
    <location>
        <position position="391"/>
    </location>
</feature>
<reference key="1">
    <citation type="journal article" date="2004" name="Plant Physiol.">
        <title>The Arabidopsis cyclophilin gene family.</title>
        <authorList>
            <person name="Romano P.G.N."/>
            <person name="Horton P."/>
            <person name="Gray J.E."/>
        </authorList>
    </citation>
    <scope>NUCLEOTIDE SEQUENCE [MRNA] (ISOFORM 2)</scope>
    <scope>TISSUE SPECIFICITY</scope>
    <scope>GENE FAMILY</scope>
    <scope>NOMENCLATURE</scope>
</reference>
<reference key="2">
    <citation type="journal article" date="2000" name="Nature">
        <title>Sequence and analysis of chromosome 3 of the plant Arabidopsis thaliana.</title>
        <authorList>
            <person name="Salanoubat M."/>
            <person name="Lemcke K."/>
            <person name="Rieger M."/>
            <person name="Ansorge W."/>
            <person name="Unseld M."/>
            <person name="Fartmann B."/>
            <person name="Valle G."/>
            <person name="Bloecker H."/>
            <person name="Perez-Alonso M."/>
            <person name="Obermaier B."/>
            <person name="Delseny M."/>
            <person name="Boutry M."/>
            <person name="Grivell L.A."/>
            <person name="Mache R."/>
            <person name="Puigdomenech P."/>
            <person name="De Simone V."/>
            <person name="Choisne N."/>
            <person name="Artiguenave F."/>
            <person name="Robert C."/>
            <person name="Brottier P."/>
            <person name="Wincker P."/>
            <person name="Cattolico L."/>
            <person name="Weissenbach J."/>
            <person name="Saurin W."/>
            <person name="Quetier F."/>
            <person name="Schaefer M."/>
            <person name="Mueller-Auer S."/>
            <person name="Gabel C."/>
            <person name="Fuchs M."/>
            <person name="Benes V."/>
            <person name="Wurmbach E."/>
            <person name="Drzonek H."/>
            <person name="Erfle H."/>
            <person name="Jordan N."/>
            <person name="Bangert S."/>
            <person name="Wiedelmann R."/>
            <person name="Kranz H."/>
            <person name="Voss H."/>
            <person name="Holland R."/>
            <person name="Brandt P."/>
            <person name="Nyakatura G."/>
            <person name="Vezzi A."/>
            <person name="D'Angelo M."/>
            <person name="Pallavicini A."/>
            <person name="Toppo S."/>
            <person name="Simionati B."/>
            <person name="Conrad A."/>
            <person name="Hornischer K."/>
            <person name="Kauer G."/>
            <person name="Loehnert T.-H."/>
            <person name="Nordsiek G."/>
            <person name="Reichelt J."/>
            <person name="Scharfe M."/>
            <person name="Schoen O."/>
            <person name="Bargues M."/>
            <person name="Terol J."/>
            <person name="Climent J."/>
            <person name="Navarro P."/>
            <person name="Collado C."/>
            <person name="Perez-Perez A."/>
            <person name="Ottenwaelder B."/>
            <person name="Duchemin D."/>
            <person name="Cooke R."/>
            <person name="Laudie M."/>
            <person name="Berger-Llauro C."/>
            <person name="Purnelle B."/>
            <person name="Masuy D."/>
            <person name="de Haan M."/>
            <person name="Maarse A.C."/>
            <person name="Alcaraz J.-P."/>
            <person name="Cottet A."/>
            <person name="Casacuberta E."/>
            <person name="Monfort A."/>
            <person name="Argiriou A."/>
            <person name="Flores M."/>
            <person name="Liguori R."/>
            <person name="Vitale D."/>
            <person name="Mannhaupt G."/>
            <person name="Haase D."/>
            <person name="Schoof H."/>
            <person name="Rudd S."/>
            <person name="Zaccaria P."/>
            <person name="Mewes H.-W."/>
            <person name="Mayer K.F.X."/>
            <person name="Kaul S."/>
            <person name="Town C.D."/>
            <person name="Koo H.L."/>
            <person name="Tallon L.J."/>
            <person name="Jenkins J."/>
            <person name="Rooney T."/>
            <person name="Rizzo M."/>
            <person name="Walts A."/>
            <person name="Utterback T."/>
            <person name="Fujii C.Y."/>
            <person name="Shea T.P."/>
            <person name="Creasy T.H."/>
            <person name="Haas B."/>
            <person name="Maiti R."/>
            <person name="Wu D."/>
            <person name="Peterson J."/>
            <person name="Van Aken S."/>
            <person name="Pai G."/>
            <person name="Militscher J."/>
            <person name="Sellers P."/>
            <person name="Gill J.E."/>
            <person name="Feldblyum T.V."/>
            <person name="Preuss D."/>
            <person name="Lin X."/>
            <person name="Nierman W.C."/>
            <person name="Salzberg S.L."/>
            <person name="White O."/>
            <person name="Venter J.C."/>
            <person name="Fraser C.M."/>
            <person name="Kaneko T."/>
            <person name="Nakamura Y."/>
            <person name="Sato S."/>
            <person name="Kato T."/>
            <person name="Asamizu E."/>
            <person name="Sasamoto S."/>
            <person name="Kimura T."/>
            <person name="Idesawa K."/>
            <person name="Kawashima K."/>
            <person name="Kishida Y."/>
            <person name="Kiyokawa C."/>
            <person name="Kohara M."/>
            <person name="Matsumoto M."/>
            <person name="Matsuno A."/>
            <person name="Muraki A."/>
            <person name="Nakayama S."/>
            <person name="Nakazaki N."/>
            <person name="Shinpo S."/>
            <person name="Takeuchi C."/>
            <person name="Wada T."/>
            <person name="Watanabe A."/>
            <person name="Yamada M."/>
            <person name="Yasuda M."/>
            <person name="Tabata S."/>
        </authorList>
    </citation>
    <scope>NUCLEOTIDE SEQUENCE [LARGE SCALE GENOMIC DNA]</scope>
    <source>
        <strain>cv. Columbia</strain>
    </source>
</reference>
<reference key="3">
    <citation type="journal article" date="2017" name="Plant J.">
        <title>Araport11: a complete reannotation of the Arabidopsis thaliana reference genome.</title>
        <authorList>
            <person name="Cheng C.Y."/>
            <person name="Krishnakumar V."/>
            <person name="Chan A.P."/>
            <person name="Thibaud-Nissen F."/>
            <person name="Schobel S."/>
            <person name="Town C.D."/>
        </authorList>
    </citation>
    <scope>GENOME REANNOTATION</scope>
    <source>
        <strain>cv. Columbia</strain>
    </source>
</reference>
<reference key="4">
    <citation type="journal article" date="2003" name="Science">
        <title>Empirical analysis of transcriptional activity in the Arabidopsis genome.</title>
        <authorList>
            <person name="Yamada K."/>
            <person name="Lim J."/>
            <person name="Dale J.M."/>
            <person name="Chen H."/>
            <person name="Shinn P."/>
            <person name="Palm C.J."/>
            <person name="Southwick A.M."/>
            <person name="Wu H.C."/>
            <person name="Kim C.J."/>
            <person name="Nguyen M."/>
            <person name="Pham P.K."/>
            <person name="Cheuk R.F."/>
            <person name="Karlin-Newmann G."/>
            <person name="Liu S.X."/>
            <person name="Lam B."/>
            <person name="Sakano H."/>
            <person name="Wu T."/>
            <person name="Yu G."/>
            <person name="Miranda M."/>
            <person name="Quach H.L."/>
            <person name="Tripp M."/>
            <person name="Chang C.H."/>
            <person name="Lee J.M."/>
            <person name="Toriumi M.J."/>
            <person name="Chan M.M."/>
            <person name="Tang C.C."/>
            <person name="Onodera C.S."/>
            <person name="Deng J.M."/>
            <person name="Akiyama K."/>
            <person name="Ansari Y."/>
            <person name="Arakawa T."/>
            <person name="Banh J."/>
            <person name="Banno F."/>
            <person name="Bowser L."/>
            <person name="Brooks S.Y."/>
            <person name="Carninci P."/>
            <person name="Chao Q."/>
            <person name="Choy N."/>
            <person name="Enju A."/>
            <person name="Goldsmith A.D."/>
            <person name="Gurjal M."/>
            <person name="Hansen N.F."/>
            <person name="Hayashizaki Y."/>
            <person name="Johnson-Hopson C."/>
            <person name="Hsuan V.W."/>
            <person name="Iida K."/>
            <person name="Karnes M."/>
            <person name="Khan S."/>
            <person name="Koesema E."/>
            <person name="Ishida J."/>
            <person name="Jiang P.X."/>
            <person name="Jones T."/>
            <person name="Kawai J."/>
            <person name="Kamiya A."/>
            <person name="Meyers C."/>
            <person name="Nakajima M."/>
            <person name="Narusaka M."/>
            <person name="Seki M."/>
            <person name="Sakurai T."/>
            <person name="Satou M."/>
            <person name="Tamse R."/>
            <person name="Vaysberg M."/>
            <person name="Wallender E.K."/>
            <person name="Wong C."/>
            <person name="Yamamura Y."/>
            <person name="Yuan S."/>
            <person name="Shinozaki K."/>
            <person name="Davis R.W."/>
            <person name="Theologis A."/>
            <person name="Ecker J.R."/>
        </authorList>
    </citation>
    <scope>NUCLEOTIDE SEQUENCE [LARGE SCALE MRNA] (ISOFORM 1)</scope>
    <source>
        <strain>cv. Columbia</strain>
    </source>
</reference>
<reference key="5">
    <citation type="journal article" date="2009" name="DNA Res.">
        <title>Analysis of multiple occurrences of alternative splicing events in Arabidopsis thaliana using novel sequenced full-length cDNAs.</title>
        <authorList>
            <person name="Iida K."/>
            <person name="Fukami-Kobayashi K."/>
            <person name="Toyoda A."/>
            <person name="Sakaki Y."/>
            <person name="Kobayashi M."/>
            <person name="Seki M."/>
            <person name="Shinozaki K."/>
        </authorList>
    </citation>
    <scope>NUCLEOTIDE SEQUENCE [LARGE SCALE MRNA] (ISOFORM 1)</scope>
    <source>
        <strain>cv. Columbia</strain>
        <tissue>Rosette leaf</tissue>
    </source>
</reference>
<reference key="6">
    <citation type="journal article" date="2004" name="Plant Physiol.">
        <title>Immunophilins and parvulins. Superfamily of peptidyl prolyl isomerases in Arabidopsis.</title>
        <authorList>
            <person name="He Z."/>
            <person name="Li L."/>
            <person name="Luan S."/>
        </authorList>
    </citation>
    <scope>GENE FAMILY</scope>
    <scope>NOMENCLATURE</scope>
    <scope>TISSUE SPECIFICITY</scope>
    <source>
        <strain>cv. Columbia</strain>
    </source>
</reference>
<reference key="7">
    <citation type="journal article" date="2004" name="J. Biol. Chem.">
        <title>Interactions of Arabidopsis RS domain containing cyclophilins with SR proteins and U1 and U11 small nuclear ribonucleoprotein-specific proteins suggest their involvement in pre-mRNA Splicing.</title>
        <authorList>
            <person name="Lorkovic Z.J."/>
            <person name="Lopato S."/>
            <person name="Pexa M."/>
            <person name="Lehner R."/>
            <person name="Barta A."/>
        </authorList>
    </citation>
    <scope>ALTERNATIVE SPLICING</scope>
    <scope>INTERACTION WITH RNU1; SCL28; SCL30; SR30 AND SR34</scope>
    <scope>SUBCELLULAR LOCATION</scope>
</reference>
<reference key="8">
    <citation type="journal article" date="2005" name="RNA">
        <title>Evolutionary conservation of minor U12-type spliceosome between plants and humans.</title>
        <authorList>
            <person name="Lorkovic Z.J."/>
            <person name="Lehner R."/>
            <person name="Forstner C."/>
            <person name="Barta A."/>
        </authorList>
    </citation>
    <scope>INTERACTION WITH SNRNP35</scope>
</reference>
<reference key="9">
    <citation type="journal article" date="2009" name="Plant Physiol.">
        <title>Large-scale Arabidopsis phosphoproteome profiling reveals novel chloroplast kinase substrates and phosphorylation networks.</title>
        <authorList>
            <person name="Reiland S."/>
            <person name="Messerli G."/>
            <person name="Baerenfaller K."/>
            <person name="Gerrits B."/>
            <person name="Endler A."/>
            <person name="Grossmann J."/>
            <person name="Gruissem W."/>
            <person name="Baginsky S."/>
        </authorList>
    </citation>
    <scope>PHOSPHORYLATION [LARGE SCALE ANALYSIS] AT SER-340</scope>
    <scope>IDENTIFICATION BY MASS SPECTROMETRY [LARGE SCALE ANALYSIS]</scope>
</reference>
<sequence>MTKKKNPNVFLDVSIGGDPVQRIVIELFADVVPKTAENFRALCTGEAGVGKSTGKPLHFKGSSFHRVIKGFMAQGGDFSNGNGTGGESIYGGKFSDENFRLDHDGAGVLSMANCGPNTNGSQFFILFKRQPHLDGKHVVFGKVVEGMAVIKKMELVGTSDGKPTSPVKIIDCGETSQIRAHDAAEREKGKSKKSNKNFSPGDVSDREAKETRKKESNEKRIKRKRRYSSSDSYSSSSDSDSDSESEAYSSSSYESSSSSDGKHRKRKSTTRHKGRRGERKSKGRSGKKKARPDRKPSTNSSSDTESSSSSDDEKVGHKAIKSVKVDNADQHANLDDSVKSRSRSPIRRRNQNSRSKSPSRSPVRVLGNGNRSPSRSPVRDLGNGSRSPREKPTEETVGKSFRSPSPSGVPKRIRKGRGFTERYSFARKYHTPSPERSPPRHWPDRRNFQDRNRDRYPSNRSYSERSPRGRFRSPPRRRSPPRYNRRRRSTSRSPDGYRRRLRDGSRSQSPRHRSRSQSPRKRQPISQDLKSRLGPQRSPIRGGRTSPAESLSPSHSPSPPGKRGLVSYAD</sequence>
<gene>
    <name type="primary">CYP63</name>
    <name type="synonym">CYPRS64</name>
    <name type="ordered locus">At3g63400</name>
    <name type="ORF">MAA21.30</name>
</gene>